<comment type="function">
    <text evidence="3 4">Palmitoyltransferase that catalyzes the addition of palmitate onto various protein substrates such as CTNND2, CD36, GSDMD, NLRP3, NOD1, NOD2, STAT3 and S1PR1 thus plays a role in various biological processes including cell adhesion, inflammation, fatty acid uptake, bacterial sensing or cardiac functions. Plays an important role in the regulation of synapse efficacy by mediating palmitoylation of delta-catenin/CTNND2, thereby increasing synaptic delivery and surface stabilization of alpha-amino-3-hydroxy-5-methyl-4-isoxazole propionic acid receptors (AMPARs). Under basal conditions, remains at the synaptic membrane through FYN-mediated phosphorylation that prevents association with endocytic proteins. Neuronal activity enhances the internalization and trafficking of DHHC5 from spines to dendritic shafts where it palmitoylates delta-catenin/CTNND2. Regulates cell adhesion at the plasma membrane by palmitoylating GOLGA7B and DSG2. Plays a role in innate immune response by mediating the palmitoylation of NOD1 and NOD2 and their proper recruitment to the bacterial entry site and phagosomes. Also participates in fatty acid uptake by palmitoylating CD36 and thereby targeting it to the plasma membrane. Upon binding of fatty acids to CD36, gets phosphorylated by LYN leading to inactivation and subsequent CD36 caveolar endocytosis (By similarity). Controls oligodendrocyte development by catalyzing STAT3 palmitoylation (By similarity). Acts as a regulator of inflammatory response by mediating palmitoylation of NLRP3 and GSDMD. Palmitoylates NLRP3 to promote inflammasome assembly and activation. Activates pyroptosis by catalyzing palmitoylation of gasdermin-D (GSDMD), thereby promoting membrane translocation and pore formation of GSDMD (By similarity).</text>
</comment>
<comment type="catalytic activity">
    <reaction evidence="3">
        <text>L-cysteinyl-[protein] + hexadecanoyl-CoA = S-hexadecanoyl-L-cysteinyl-[protein] + CoA</text>
        <dbReference type="Rhea" id="RHEA:36683"/>
        <dbReference type="Rhea" id="RHEA-COMP:10131"/>
        <dbReference type="Rhea" id="RHEA-COMP:11032"/>
        <dbReference type="ChEBI" id="CHEBI:29950"/>
        <dbReference type="ChEBI" id="CHEBI:57287"/>
        <dbReference type="ChEBI" id="CHEBI:57379"/>
        <dbReference type="ChEBI" id="CHEBI:74151"/>
        <dbReference type="EC" id="2.3.1.225"/>
    </reaction>
    <physiologicalReaction direction="left-to-right" evidence="3">
        <dbReference type="Rhea" id="RHEA:36684"/>
    </physiologicalReaction>
</comment>
<comment type="subcellular location">
    <subcellularLocation>
        <location evidence="3">Cell membrane</location>
        <topology evidence="5">Multi-pass membrane protein</topology>
    </subcellularLocation>
</comment>
<comment type="domain">
    <text evidence="2">The DHHC domain is required for palmitoyltransferase activity.</text>
</comment>
<comment type="PTM">
    <text evidence="4">Phosphorylation regulates association with endocytic proteins and its subcellular localization. Phosphorylation by LYN during fatty acid uptake leads to inactivation of the activity.</text>
</comment>
<comment type="PTM">
    <text evidence="1 4">Autopalmitoylated (By similarity). Palmitoylation of the C-terminal tail regulates stimulation-dependent plasma membrane motility (By similarity).</text>
</comment>
<comment type="similarity">
    <text evidence="8">Belongs to the DHHC palmitoyltransferase family. ERF2/ZDHHC9 subfamily.</text>
</comment>
<organism>
    <name type="scientific">Bos taurus</name>
    <name type="common">Bovine</name>
    <dbReference type="NCBI Taxonomy" id="9913"/>
    <lineage>
        <taxon>Eukaryota</taxon>
        <taxon>Metazoa</taxon>
        <taxon>Chordata</taxon>
        <taxon>Craniata</taxon>
        <taxon>Vertebrata</taxon>
        <taxon>Euteleostomi</taxon>
        <taxon>Mammalia</taxon>
        <taxon>Eutheria</taxon>
        <taxon>Laurasiatheria</taxon>
        <taxon>Artiodactyla</taxon>
        <taxon>Ruminantia</taxon>
        <taxon>Pecora</taxon>
        <taxon>Bovidae</taxon>
        <taxon>Bovinae</taxon>
        <taxon>Bos</taxon>
    </lineage>
</organism>
<name>ZDHC5_BOVIN</name>
<reference key="1">
    <citation type="journal article" date="2009" name="Genome Biol.">
        <title>A whole-genome assembly of the domestic cow, Bos taurus.</title>
        <authorList>
            <person name="Zimin A.V."/>
            <person name="Delcher A.L."/>
            <person name="Florea L."/>
            <person name="Kelley D.R."/>
            <person name="Schatz M.C."/>
            <person name="Puiu D."/>
            <person name="Hanrahan F."/>
            <person name="Pertea G."/>
            <person name="Van Tassell C.P."/>
            <person name="Sonstegard T.S."/>
            <person name="Marcais G."/>
            <person name="Roberts M."/>
            <person name="Subramanian P."/>
            <person name="Yorke J.A."/>
            <person name="Salzberg S.L."/>
        </authorList>
    </citation>
    <scope>NUCLEOTIDE SEQUENCE [LARGE SCALE GENOMIC DNA]</scope>
    <source>
        <strain>Hereford</strain>
    </source>
</reference>
<protein>
    <recommendedName>
        <fullName>Palmitoyltransferase ZDHHC5</fullName>
        <ecNumber evidence="3">2.3.1.225</ecNumber>
    </recommendedName>
    <alternativeName>
        <fullName>Zinc finger DHHC domain-containing protein 5</fullName>
        <shortName>DHHC-5</shortName>
    </alternativeName>
</protein>
<evidence type="ECO:0000250" key="1">
    <source>
        <dbReference type="UniProtKB" id="Q2THW7"/>
    </source>
</evidence>
<evidence type="ECO:0000250" key="2">
    <source>
        <dbReference type="UniProtKB" id="Q8IUH5"/>
    </source>
</evidence>
<evidence type="ECO:0000250" key="3">
    <source>
        <dbReference type="UniProtKB" id="Q8VDZ4"/>
    </source>
</evidence>
<evidence type="ECO:0000250" key="4">
    <source>
        <dbReference type="UniProtKB" id="Q9C0B5"/>
    </source>
</evidence>
<evidence type="ECO:0000255" key="5"/>
<evidence type="ECO:0000255" key="6">
    <source>
        <dbReference type="PROSITE-ProRule" id="PRU00067"/>
    </source>
</evidence>
<evidence type="ECO:0000256" key="7">
    <source>
        <dbReference type="SAM" id="MobiDB-lite"/>
    </source>
</evidence>
<evidence type="ECO:0000305" key="8"/>
<proteinExistence type="inferred from homology"/>
<gene>
    <name type="primary">ZDHHC5</name>
</gene>
<accession>E1BLT8</accession>
<dbReference type="EC" id="2.3.1.225" evidence="3"/>
<dbReference type="EMBL" id="DAAA02041769">
    <property type="status" value="NOT_ANNOTATED_CDS"/>
    <property type="molecule type" value="Genomic_DNA"/>
</dbReference>
<dbReference type="RefSeq" id="NP_001179692.1">
    <property type="nucleotide sequence ID" value="NM_001192763.3"/>
</dbReference>
<dbReference type="RefSeq" id="XP_005201016.1">
    <property type="nucleotide sequence ID" value="XM_005200959.4"/>
</dbReference>
<dbReference type="RefSeq" id="XP_024831102.1">
    <property type="nucleotide sequence ID" value="XM_024975334.2"/>
</dbReference>
<dbReference type="SMR" id="E1BLT8"/>
<dbReference type="FunCoup" id="E1BLT8">
    <property type="interactions" value="2786"/>
</dbReference>
<dbReference type="STRING" id="9913.ENSBTAP00000003078"/>
<dbReference type="PaxDb" id="9913-ENSBTAP00000003078"/>
<dbReference type="Ensembl" id="ENSBTAT00000003078.7">
    <property type="protein sequence ID" value="ENSBTAP00000003078.5"/>
    <property type="gene ID" value="ENSBTAG00000002381.7"/>
</dbReference>
<dbReference type="GeneID" id="533250"/>
<dbReference type="KEGG" id="bta:533250"/>
<dbReference type="CTD" id="25921"/>
<dbReference type="VEuPathDB" id="HostDB:ENSBTAG00000002381"/>
<dbReference type="VGNC" id="VGNC:37143">
    <property type="gene designation" value="ZDHHC5"/>
</dbReference>
<dbReference type="eggNOG" id="KOG1311">
    <property type="taxonomic scope" value="Eukaryota"/>
</dbReference>
<dbReference type="GeneTree" id="ENSGT00940000156001"/>
<dbReference type="HOGENOM" id="CLU_013779_0_0_1"/>
<dbReference type="InParanoid" id="E1BLT8"/>
<dbReference type="OMA" id="KMTRGES"/>
<dbReference type="OrthoDB" id="4096362at2759"/>
<dbReference type="TreeFam" id="TF354263"/>
<dbReference type="Proteomes" id="UP000009136">
    <property type="component" value="Chromosome 15"/>
</dbReference>
<dbReference type="Bgee" id="ENSBTAG00000002381">
    <property type="expression patterns" value="Expressed in retina and 106 other cell types or tissues"/>
</dbReference>
<dbReference type="GO" id="GO:0030425">
    <property type="term" value="C:dendrite"/>
    <property type="evidence" value="ECO:0007669"/>
    <property type="project" value="Ensembl"/>
</dbReference>
<dbReference type="GO" id="GO:0098978">
    <property type="term" value="C:glutamatergic synapse"/>
    <property type="evidence" value="ECO:0007669"/>
    <property type="project" value="Ensembl"/>
</dbReference>
<dbReference type="GO" id="GO:0005654">
    <property type="term" value="C:nucleoplasm"/>
    <property type="evidence" value="ECO:0007669"/>
    <property type="project" value="Ensembl"/>
</dbReference>
<dbReference type="GO" id="GO:0045335">
    <property type="term" value="C:phagocytic vesicle"/>
    <property type="evidence" value="ECO:0007669"/>
    <property type="project" value="Ensembl"/>
</dbReference>
<dbReference type="GO" id="GO:0005886">
    <property type="term" value="C:plasma membrane"/>
    <property type="evidence" value="ECO:0000318"/>
    <property type="project" value="GO_Central"/>
</dbReference>
<dbReference type="GO" id="GO:0098794">
    <property type="term" value="C:postsynapse"/>
    <property type="evidence" value="ECO:0007669"/>
    <property type="project" value="Ensembl"/>
</dbReference>
<dbReference type="GO" id="GO:0016409">
    <property type="term" value="F:palmitoyltransferase activity"/>
    <property type="evidence" value="ECO:0000318"/>
    <property type="project" value="GO_Central"/>
</dbReference>
<dbReference type="GO" id="GO:0019706">
    <property type="term" value="F:protein-cysteine S-palmitoyltransferase activity"/>
    <property type="evidence" value="ECO:0000250"/>
    <property type="project" value="UniProtKB"/>
</dbReference>
<dbReference type="GO" id="GO:0045087">
    <property type="term" value="P:innate immune response"/>
    <property type="evidence" value="ECO:0007669"/>
    <property type="project" value="UniProtKB-KW"/>
</dbReference>
<dbReference type="GO" id="GO:0006869">
    <property type="term" value="P:lipid transport"/>
    <property type="evidence" value="ECO:0007669"/>
    <property type="project" value="UniProtKB-KW"/>
</dbReference>
<dbReference type="GO" id="GO:1900227">
    <property type="term" value="P:positive regulation of NLRP3 inflammasome complex assembly"/>
    <property type="evidence" value="ECO:0007669"/>
    <property type="project" value="Ensembl"/>
</dbReference>
<dbReference type="GO" id="GO:0062208">
    <property type="term" value="P:positive regulation of pattern recognition receptor signaling pathway"/>
    <property type="evidence" value="ECO:0000318"/>
    <property type="project" value="GO_Central"/>
</dbReference>
<dbReference type="GO" id="GO:1905171">
    <property type="term" value="P:positive regulation of protein localization to phagocytic vesicle"/>
    <property type="evidence" value="ECO:0007669"/>
    <property type="project" value="Ensembl"/>
</dbReference>
<dbReference type="GO" id="GO:1903078">
    <property type="term" value="P:positive regulation of protein localization to plasma membrane"/>
    <property type="evidence" value="ECO:0007669"/>
    <property type="project" value="Ensembl"/>
</dbReference>
<dbReference type="GO" id="GO:0140639">
    <property type="term" value="P:positive regulation of pyroptotic inflammatory response"/>
    <property type="evidence" value="ECO:0000250"/>
    <property type="project" value="UniProtKB"/>
</dbReference>
<dbReference type="GO" id="GO:0072659">
    <property type="term" value="P:protein localization to plasma membrane"/>
    <property type="evidence" value="ECO:0007669"/>
    <property type="project" value="Ensembl"/>
</dbReference>
<dbReference type="InterPro" id="IPR001594">
    <property type="entry name" value="Palmitoyltrfase_DHHC"/>
</dbReference>
<dbReference type="PANTHER" id="PTHR12349">
    <property type="entry name" value="ANKYRIN REPEAT AND LEM DOMAIN-CONTAINING PROTEIN 2"/>
    <property type="match status" value="1"/>
</dbReference>
<dbReference type="PANTHER" id="PTHR12349:SF3">
    <property type="entry name" value="PALMITOYLTRANSFERASE ZDHHC5"/>
    <property type="match status" value="1"/>
</dbReference>
<dbReference type="Pfam" id="PF01529">
    <property type="entry name" value="DHHC"/>
    <property type="match status" value="1"/>
</dbReference>
<dbReference type="PROSITE" id="PS50216">
    <property type="entry name" value="DHHC"/>
    <property type="match status" value="1"/>
</dbReference>
<feature type="chain" id="PRO_0000418363" description="Palmitoyltransferase ZDHHC5">
    <location>
        <begin position="1"/>
        <end position="714"/>
    </location>
</feature>
<feature type="topological domain" description="Cytoplasmic" evidence="5">
    <location>
        <begin position="1"/>
        <end position="13"/>
    </location>
</feature>
<feature type="transmembrane region" description="Helical" evidence="5">
    <location>
        <begin position="14"/>
        <end position="34"/>
    </location>
</feature>
<feature type="topological domain" description="Extracellular" evidence="5">
    <location>
        <begin position="35"/>
        <end position="52"/>
    </location>
</feature>
<feature type="transmembrane region" description="Helical" evidence="5">
    <location>
        <begin position="53"/>
        <end position="73"/>
    </location>
</feature>
<feature type="topological domain" description="Cytoplasmic" evidence="5">
    <location>
        <begin position="74"/>
        <end position="148"/>
    </location>
</feature>
<feature type="transmembrane region" description="Helical" evidence="5">
    <location>
        <begin position="149"/>
        <end position="169"/>
    </location>
</feature>
<feature type="topological domain" description="Extracellular" evidence="5">
    <location>
        <begin position="170"/>
        <end position="191"/>
    </location>
</feature>
<feature type="transmembrane region" description="Helical" evidence="5">
    <location>
        <begin position="192"/>
        <end position="212"/>
    </location>
</feature>
<feature type="topological domain" description="Cytoplasmic" evidence="5">
    <location>
        <begin position="213"/>
        <end position="714"/>
    </location>
</feature>
<feature type="domain" description="DHHC" evidence="6">
    <location>
        <begin position="104"/>
        <end position="154"/>
    </location>
</feature>
<feature type="region of interest" description="Disordered" evidence="7">
    <location>
        <begin position="289"/>
        <end position="714"/>
    </location>
</feature>
<feature type="compositionally biased region" description="Low complexity" evidence="7">
    <location>
        <begin position="359"/>
        <end position="373"/>
    </location>
</feature>
<feature type="compositionally biased region" description="Polar residues" evidence="7">
    <location>
        <begin position="388"/>
        <end position="398"/>
    </location>
</feature>
<feature type="compositionally biased region" description="Low complexity" evidence="7">
    <location>
        <begin position="422"/>
        <end position="432"/>
    </location>
</feature>
<feature type="compositionally biased region" description="Polar residues" evidence="7">
    <location>
        <begin position="445"/>
        <end position="478"/>
    </location>
</feature>
<feature type="compositionally biased region" description="Polar residues" evidence="7">
    <location>
        <begin position="667"/>
        <end position="678"/>
    </location>
</feature>
<feature type="compositionally biased region" description="Pro residues" evidence="7">
    <location>
        <begin position="683"/>
        <end position="692"/>
    </location>
</feature>
<feature type="active site" description="S-palmitoyl cysteine intermediate" evidence="3">
    <location>
        <position position="134"/>
    </location>
</feature>
<feature type="modified residue" description="Phosphotyrosine" evidence="3">
    <location>
        <position position="91"/>
    </location>
</feature>
<feature type="modified residue" description="Phosphoserine" evidence="4">
    <location>
        <position position="247"/>
    </location>
</feature>
<feature type="modified residue" description="Phosphothreonine" evidence="3">
    <location>
        <position position="294"/>
    </location>
</feature>
<feature type="modified residue" description="Phosphoserine" evidence="4">
    <location>
        <position position="296"/>
    </location>
</feature>
<feature type="modified residue" description="Phosphoserine" evidence="4">
    <location>
        <position position="299"/>
    </location>
</feature>
<feature type="modified residue" description="Phosphothreonine" evidence="3">
    <location>
        <position position="303"/>
    </location>
</feature>
<feature type="modified residue" description="Phosphoserine" evidence="4">
    <location>
        <position position="345"/>
    </location>
</feature>
<feature type="modified residue" description="Phosphothreonine" evidence="4">
    <location>
        <position position="348"/>
    </location>
</feature>
<feature type="modified residue" description="Phosphothreonine" evidence="3">
    <location>
        <position position="350"/>
    </location>
</feature>
<feature type="modified residue" description="Phosphoserine" evidence="4">
    <location>
        <position position="380"/>
    </location>
</feature>
<feature type="modified residue" description="Phosphoserine" evidence="4">
    <location>
        <position position="398"/>
    </location>
</feature>
<feature type="modified residue" description="Phosphoserine" evidence="4">
    <location>
        <position position="406"/>
    </location>
</feature>
<feature type="modified residue" description="Phosphoserine" evidence="4">
    <location>
        <position position="409"/>
    </location>
</feature>
<feature type="modified residue" description="Phosphothreonine" evidence="4">
    <location>
        <position position="411"/>
    </location>
</feature>
<feature type="modified residue" description="Phosphoserine" evidence="4">
    <location>
        <position position="425"/>
    </location>
</feature>
<feature type="modified residue" description="Phosphoserine" evidence="3">
    <location>
        <position position="429"/>
    </location>
</feature>
<feature type="modified residue" description="Phosphoserine" evidence="4">
    <location>
        <position position="432"/>
    </location>
</feature>
<feature type="modified residue" description="Phosphothreonine" evidence="4">
    <location>
        <position position="436"/>
    </location>
</feature>
<feature type="modified residue" description="Phosphoserine" evidence="4">
    <location>
        <position position="529"/>
    </location>
</feature>
<feature type="modified residue" description="Phosphoserine" evidence="4">
    <location>
        <position position="554"/>
    </location>
</feature>
<feature type="modified residue" description="Omega-N-methylarginine" evidence="4">
    <location>
        <position position="616"/>
    </location>
</feature>
<feature type="modified residue" description="Phosphoserine" evidence="4">
    <location>
        <position position="620"/>
    </location>
</feature>
<feature type="modified residue" description="Phosphothreonine" evidence="4">
    <location>
        <position position="658"/>
    </location>
</feature>
<feature type="modified residue" description="Phosphoserine" evidence="4">
    <location>
        <position position="693"/>
    </location>
</feature>
<feature type="modified residue" description="Omega-N-methylarginine" evidence="3">
    <location>
        <position position="696"/>
    </location>
</feature>
<sequence length="714" mass="76976">MPAESAKRFKPSKYVPVSAAAIFLVGATTLFFAFTCPGLSLSVSPAVPVYNAVVFLFVLANFSMATFMDPGVFPRAEEDEDKEDDFRAPLYKTVEIKGIQVRMKWCATCRFYRPPRCSHCSVCDNCVEEFDHHCPWVNNCIGRRNYRYFFLFLLSLTAHITGVFGFGLLYVLYHMEELSGVRTAVTMAVMCVAGLFFIPVAGLTGFHVVLVARGRTTNEQVTGKFRGGVNPFTNGCCNNVSRVLCSSPAPRYLGRPKKEKTIVIRPPFLRPEVSDGQITVKIMDNGIQGELRRTKSKGSLEVTESQSADAEPPPPPKPDLSRYTGLRTHLSLATNEESSLLGKDSPPTPTMYKYRPGYSSSSASAAMPHSSSAKLSRGDSLKEPPSIAESSRQPSYRSEPSLEPESFRSPTLGKGFPFDPLSSGSRSSSLKSAQGTGFELGPLQSIRSEGTTSTSYKSLANQTRNGSLSYDSLLTPSDSPDFESVQAGPEPEPPLGYTSPFLSARLAQQREAERHPRLAPGGPAPREPSPVRYDNLSRHIVASLQEREKLLRQSPPPGREEEPGLGDSGVQCTPGSGHAPRTSSSSDDSKRSPLGKTPLARPVAPRFGKPDGLRGRGLASPEPGLPAPYLGRSVSYSSQKAPPGVPETEEVALQPLLTPKDEVQLKTAYSKSNGQPKSIGSAPPGPGQPPLSSPTRGGVKKVSGVGGTTYEISV</sequence>
<keyword id="KW-0012">Acyltransferase</keyword>
<keyword id="KW-1003">Cell membrane</keyword>
<keyword id="KW-0391">Immunity</keyword>
<keyword id="KW-0399">Innate immunity</keyword>
<keyword id="KW-0445">Lipid transport</keyword>
<keyword id="KW-0449">Lipoprotein</keyword>
<keyword id="KW-0472">Membrane</keyword>
<keyword id="KW-0488">Methylation</keyword>
<keyword id="KW-0564">Palmitate</keyword>
<keyword id="KW-0597">Phosphoprotein</keyword>
<keyword id="KW-1185">Reference proteome</keyword>
<keyword id="KW-0808">Transferase</keyword>
<keyword id="KW-0812">Transmembrane</keyword>
<keyword id="KW-1133">Transmembrane helix</keyword>
<keyword id="KW-0813">Transport</keyword>